<organism>
    <name type="scientific">Homo sapiens</name>
    <name type="common">Human</name>
    <dbReference type="NCBI Taxonomy" id="9606"/>
    <lineage>
        <taxon>Eukaryota</taxon>
        <taxon>Metazoa</taxon>
        <taxon>Chordata</taxon>
        <taxon>Craniata</taxon>
        <taxon>Vertebrata</taxon>
        <taxon>Euteleostomi</taxon>
        <taxon>Mammalia</taxon>
        <taxon>Eutheria</taxon>
        <taxon>Euarchontoglires</taxon>
        <taxon>Primates</taxon>
        <taxon>Haplorrhini</taxon>
        <taxon>Catarrhini</taxon>
        <taxon>Hominidae</taxon>
        <taxon>Homo</taxon>
    </lineage>
</organism>
<name>ZN436_HUMAN</name>
<comment type="function">
    <text evidence="5">May be a transcriptional repressor.</text>
</comment>
<comment type="interaction">
    <interactant intactId="EBI-8489702">
        <id>Q9C0F3</id>
    </interactant>
    <interactant intactId="EBI-358049">
        <id>Q13895</id>
        <label>BYSL</label>
    </interactant>
    <organismsDiffer>false</organismsDiffer>
    <experiments>3</experiments>
</comment>
<comment type="interaction">
    <interactant intactId="EBI-8489702">
        <id>Q9C0F3</id>
    </interactant>
    <interactant intactId="EBI-11977221">
        <id>Q86Z20</id>
        <label>CCDC125</label>
    </interactant>
    <organismsDiffer>false</organismsDiffer>
    <experiments>3</experiments>
</comment>
<comment type="interaction">
    <interactant intactId="EBI-8489702">
        <id>Q9C0F3</id>
    </interactant>
    <interactant intactId="EBI-10961624">
        <id>Q2TAC2-2</id>
        <label>CCDC57</label>
    </interactant>
    <organismsDiffer>false</organismsDiffer>
    <experiments>3</experiments>
</comment>
<comment type="interaction">
    <interactant intactId="EBI-8489702">
        <id>Q9C0F3</id>
    </interactant>
    <interactant intactId="EBI-750020">
        <id>P49760</id>
        <label>CLK2</label>
    </interactant>
    <organismsDiffer>false</organismsDiffer>
    <experiments>3</experiments>
</comment>
<comment type="interaction">
    <interactant intactId="EBI-8489702">
        <id>Q9C0F3</id>
    </interactant>
    <interactant intactId="EBI-10976677">
        <id>G5E9A7</id>
        <label>DMWD</label>
    </interactant>
    <organismsDiffer>false</organismsDiffer>
    <experiments>3</experiments>
</comment>
<comment type="interaction">
    <interactant intactId="EBI-8489702">
        <id>Q9C0F3</id>
    </interactant>
    <interactant intactId="EBI-21603100">
        <id>P26378-2</id>
        <label>ELAVL4</label>
    </interactant>
    <organismsDiffer>false</organismsDiffer>
    <experiments>3</experiments>
</comment>
<comment type="interaction">
    <interactant intactId="EBI-8489702">
        <id>Q9C0F3</id>
    </interactant>
    <interactant intactId="EBI-744099">
        <id>Q9H0I2</id>
        <label>ENKD1</label>
    </interactant>
    <organismsDiffer>false</organismsDiffer>
    <experiments>3</experiments>
</comment>
<comment type="interaction">
    <interactant intactId="EBI-8489702">
        <id>Q9C0F3</id>
    </interactant>
    <interactant intactId="EBI-348399">
        <id>P22607</id>
        <label>FGFR3</label>
    </interactant>
    <organismsDiffer>false</organismsDiffer>
    <experiments>3</experiments>
</comment>
<comment type="interaction">
    <interactant intactId="EBI-8489702">
        <id>Q9C0F3</id>
    </interactant>
    <interactant intactId="EBI-744302">
        <id>P14136</id>
        <label>GFAP</label>
    </interactant>
    <organismsDiffer>false</organismsDiffer>
    <experiments>3</experiments>
</comment>
<comment type="interaction">
    <interactant intactId="EBI-8489702">
        <id>Q9C0F3</id>
    </interactant>
    <interactant intactId="EBI-351506">
        <id>P06396</id>
        <label>GSN</label>
    </interactant>
    <organismsDiffer>false</organismsDiffer>
    <experiments>3</experiments>
</comment>
<comment type="interaction">
    <interactant intactId="EBI-8489702">
        <id>Q9C0F3</id>
    </interactant>
    <interactant intactId="EBI-350145">
        <id>P01112</id>
        <label>HRAS</label>
    </interactant>
    <organismsDiffer>false</organismsDiffer>
    <experiments>3</experiments>
</comment>
<comment type="interaction">
    <interactant intactId="EBI-8489702">
        <id>Q9C0F3</id>
    </interactant>
    <interactant intactId="EBI-466029">
        <id>P42858</id>
        <label>HTT</label>
    </interactant>
    <organismsDiffer>false</organismsDiffer>
    <experiments>15</experiments>
</comment>
<comment type="interaction">
    <interactant intactId="EBI-8489702">
        <id>Q9C0F3</id>
    </interactant>
    <interactant intactId="EBI-1055254">
        <id>Q8WXH2</id>
        <label>JPH3</label>
    </interactant>
    <organismsDiffer>false</organismsDiffer>
    <experiments>3</experiments>
</comment>
<comment type="interaction">
    <interactant intactId="EBI-8489702">
        <id>Q9C0F3</id>
    </interactant>
    <interactant intactId="EBI-10975473">
        <id>O60333-2</id>
        <label>KIF1B</label>
    </interactant>
    <organismsDiffer>false</organismsDiffer>
    <experiments>3</experiments>
</comment>
<comment type="interaction">
    <interactant intactId="EBI-8489702">
        <id>Q9C0F3</id>
    </interactant>
    <interactant intactId="EBI-8472129">
        <id>Q9HAQ2</id>
        <label>KIF9</label>
    </interactant>
    <organismsDiffer>false</organismsDiffer>
    <experiments>3</experiments>
</comment>
<comment type="interaction">
    <interactant intactId="EBI-8489702">
        <id>Q9C0F3</id>
    </interactant>
    <interactant intactId="EBI-351935">
        <id>P02545</id>
        <label>LMNA</label>
    </interactant>
    <organismsDiffer>false</organismsDiffer>
    <experiments>3</experiments>
</comment>
<comment type="interaction">
    <interactant intactId="EBI-8489702">
        <id>Q9C0F3</id>
    </interactant>
    <interactant intactId="EBI-475646">
        <id>P07196</id>
        <label>NEFL</label>
    </interactant>
    <organismsDiffer>false</organismsDiffer>
    <experiments>3</experiments>
</comment>
<comment type="interaction">
    <interactant intactId="EBI-8489702">
        <id>Q9C0F3</id>
    </interactant>
    <interactant intactId="EBI-1014472">
        <id>P35240</id>
        <label>NF2</label>
    </interactant>
    <organismsDiffer>false</organismsDiffer>
    <experiments>3</experiments>
</comment>
<comment type="interaction">
    <interactant intactId="EBI-8489702">
        <id>Q9C0F3</id>
    </interactant>
    <interactant intactId="EBI-741158">
        <id>Q96HA8</id>
        <label>NTAQ1</label>
    </interactant>
    <organismsDiffer>false</organismsDiffer>
    <experiments>3</experiments>
</comment>
<comment type="interaction">
    <interactant intactId="EBI-8489702">
        <id>Q9C0F3</id>
    </interactant>
    <interactant intactId="EBI-14066006">
        <id>Q4G0R1</id>
        <label>PIBF1</label>
    </interactant>
    <organismsDiffer>false</organismsDiffer>
    <experiments>3</experiments>
</comment>
<comment type="interaction">
    <interactant intactId="EBI-8489702">
        <id>Q9C0F3</id>
    </interactant>
    <interactant intactId="EBI-5235340">
        <id>Q7Z699</id>
        <label>SPRED1</label>
    </interactant>
    <organismsDiffer>false</organismsDiffer>
    <experiments>3</experiments>
</comment>
<comment type="interaction">
    <interactant intactId="EBI-8489702">
        <id>Q9C0F3</id>
    </interactant>
    <interactant intactId="EBI-349968">
        <id>O43463</id>
        <label>SUV39H1</label>
    </interactant>
    <organismsDiffer>false</organismsDiffer>
    <experiments>2</experiments>
</comment>
<comment type="interaction">
    <interactant intactId="EBI-8489702">
        <id>Q9C0F3</id>
    </interactant>
    <interactant intactId="EBI-720609">
        <id>O76024</id>
        <label>WFS1</label>
    </interactant>
    <organismsDiffer>false</organismsDiffer>
    <experiments>3</experiments>
</comment>
<comment type="interaction">
    <interactant intactId="EBI-8489702">
        <id>Q9C0F3</id>
    </interactant>
    <interactant intactId="EBI-746277">
        <id>Q9UK33</id>
        <label>ZNF580</label>
    </interactant>
    <organismsDiffer>false</organismsDiffer>
    <experiments>3</experiments>
</comment>
<comment type="interaction">
    <interactant intactId="EBI-8489702">
        <id>Q9C0F3</id>
    </interactant>
    <interactant intactId="EBI-25900580">
        <id>Q9Y649</id>
    </interactant>
    <organismsDiffer>false</organismsDiffer>
    <experiments>3</experiments>
</comment>
<comment type="subcellular location">
    <subcellularLocation>
        <location evidence="5">Nucleus</location>
    </subcellularLocation>
</comment>
<comment type="tissue specificity">
    <text evidence="5">Expressed in fetal brain, heart, liver, spleen, bladder, lung, skin, skeletal muscle, stomach and pancreas.</text>
</comment>
<comment type="similarity">
    <text evidence="6">Belongs to the krueppel C2H2-type zinc-finger protein family.</text>
</comment>
<comment type="sequence caution" evidence="6">
    <conflict type="erroneous initiation">
        <sequence resource="EMBL-CDS" id="BAB21801"/>
    </conflict>
</comment>
<gene>
    <name type="primary">ZNF436</name>
    <name type="synonym">KIAA1710</name>
</gene>
<accession>Q9C0F3</accession>
<accession>Q658I9</accession>
<evidence type="ECO:0000255" key="1">
    <source>
        <dbReference type="PROSITE-ProRule" id="PRU00042"/>
    </source>
</evidence>
<evidence type="ECO:0000255" key="2">
    <source>
        <dbReference type="PROSITE-ProRule" id="PRU00119"/>
    </source>
</evidence>
<evidence type="ECO:0000256" key="3">
    <source>
        <dbReference type="SAM" id="MobiDB-lite"/>
    </source>
</evidence>
<evidence type="ECO:0000269" key="4">
    <source>
    </source>
</evidence>
<evidence type="ECO:0000269" key="5">
    <source>
    </source>
</evidence>
<evidence type="ECO:0000305" key="6"/>
<evidence type="ECO:0007744" key="7">
    <source>
    </source>
</evidence>
<proteinExistence type="evidence at protein level"/>
<feature type="chain" id="PRO_0000047584" description="Zinc finger protein 436">
    <location>
        <begin position="1"/>
        <end position="470"/>
    </location>
</feature>
<feature type="domain" description="KRAB" evidence="2">
    <location>
        <begin position="14"/>
        <end position="86"/>
    </location>
</feature>
<feature type="zinc finger region" description="C2H2-type 1" evidence="1">
    <location>
        <begin position="138"/>
        <end position="160"/>
    </location>
</feature>
<feature type="zinc finger region" description="C2H2-type 2" evidence="1">
    <location>
        <begin position="166"/>
        <end position="188"/>
    </location>
</feature>
<feature type="zinc finger region" description="C2H2-type 3" evidence="1">
    <location>
        <begin position="194"/>
        <end position="216"/>
    </location>
</feature>
<feature type="zinc finger region" description="C2H2-type 4" evidence="1">
    <location>
        <begin position="222"/>
        <end position="244"/>
    </location>
</feature>
<feature type="zinc finger region" description="C2H2-type 5" evidence="1">
    <location>
        <begin position="250"/>
        <end position="272"/>
    </location>
</feature>
<feature type="zinc finger region" description="C2H2-type 6" evidence="1">
    <location>
        <begin position="278"/>
        <end position="300"/>
    </location>
</feature>
<feature type="zinc finger region" description="C2H2-type 7" evidence="1">
    <location>
        <begin position="306"/>
        <end position="328"/>
    </location>
</feature>
<feature type="zinc finger region" description="C2H2-type 8" evidence="1">
    <location>
        <begin position="334"/>
        <end position="356"/>
    </location>
</feature>
<feature type="zinc finger region" description="C2H2-type 9" evidence="1">
    <location>
        <begin position="362"/>
        <end position="384"/>
    </location>
</feature>
<feature type="zinc finger region" description="C2H2-type 10" evidence="1">
    <location>
        <begin position="390"/>
        <end position="412"/>
    </location>
</feature>
<feature type="zinc finger region" description="C2H2-type 11" evidence="1">
    <location>
        <begin position="418"/>
        <end position="440"/>
    </location>
</feature>
<feature type="zinc finger region" description="C2H2-type 12" evidence="1">
    <location>
        <begin position="446"/>
        <end position="468"/>
    </location>
</feature>
<feature type="region of interest" description="Disordered" evidence="3">
    <location>
        <begin position="62"/>
        <end position="103"/>
    </location>
</feature>
<feature type="compositionally biased region" description="Acidic residues" evidence="3">
    <location>
        <begin position="85"/>
        <end position="97"/>
    </location>
</feature>
<feature type="cross-link" description="Glycyl lysine isopeptide (Lys-Gly) (interchain with G-Cter in SUMO2)" evidence="7">
    <location>
        <position position="66"/>
    </location>
</feature>
<feature type="sequence variant" id="VAR_035579" description="In a breast cancer sample; somatic mutation." evidence="4">
    <original>C</original>
    <variation>G</variation>
    <location>
        <position position="196"/>
    </location>
</feature>
<protein>
    <recommendedName>
        <fullName>Zinc finger protein 436</fullName>
    </recommendedName>
</protein>
<keyword id="KW-0238">DNA-binding</keyword>
<keyword id="KW-1017">Isopeptide bond</keyword>
<keyword id="KW-0479">Metal-binding</keyword>
<keyword id="KW-0539">Nucleus</keyword>
<keyword id="KW-1267">Proteomics identification</keyword>
<keyword id="KW-1185">Reference proteome</keyword>
<keyword id="KW-0677">Repeat</keyword>
<keyword id="KW-0804">Transcription</keyword>
<keyword id="KW-0805">Transcription regulation</keyword>
<keyword id="KW-0832">Ubl conjugation</keyword>
<keyword id="KW-0862">Zinc</keyword>
<keyword id="KW-0863">Zinc-finger</keyword>
<reference key="1">
    <citation type="journal article" date="2006" name="Mol. Biol. Rep.">
        <title>A novel zinc-finger protein ZNF436 suppresses transcriptional activities of AP-1 and SRE.</title>
        <authorList>
            <person name="Li Y."/>
            <person name="Du X."/>
            <person name="Li F."/>
            <person name="Deng Y."/>
            <person name="Yang Z."/>
            <person name="Wang Y."/>
            <person name="Pen Z."/>
            <person name="Wang Z."/>
            <person name="Yuan W."/>
            <person name="Zhu C."/>
            <person name="Wu X."/>
        </authorList>
    </citation>
    <scope>NUCLEOTIDE SEQUENCE [MRNA]</scope>
    <scope>FUNCTION</scope>
    <scope>SUBCELLULAR LOCATION</scope>
    <scope>TISSUE SPECIFICITY</scope>
    <source>
        <tissue>Fetal heart</tissue>
    </source>
</reference>
<reference key="2">
    <citation type="journal article" date="2000" name="DNA Res.">
        <title>Prediction of the coding sequences of unidentified human genes. XIX. The complete sequences of 100 new cDNA clones from brain which code for large proteins in vitro.</title>
        <authorList>
            <person name="Nagase T."/>
            <person name="Kikuno R."/>
            <person name="Hattori A."/>
            <person name="Kondo Y."/>
            <person name="Okumura K."/>
            <person name="Ohara O."/>
        </authorList>
    </citation>
    <scope>NUCLEOTIDE SEQUENCE [LARGE SCALE MRNA]</scope>
    <source>
        <tissue>Brain</tissue>
    </source>
</reference>
<reference key="3">
    <citation type="journal article" date="2007" name="BMC Genomics">
        <title>The full-ORF clone resource of the German cDNA consortium.</title>
        <authorList>
            <person name="Bechtel S."/>
            <person name="Rosenfelder H."/>
            <person name="Duda A."/>
            <person name="Schmidt C.P."/>
            <person name="Ernst U."/>
            <person name="Wellenreuther R."/>
            <person name="Mehrle A."/>
            <person name="Schuster C."/>
            <person name="Bahr A."/>
            <person name="Bloecker H."/>
            <person name="Heubner D."/>
            <person name="Hoerlein A."/>
            <person name="Michel G."/>
            <person name="Wedler H."/>
            <person name="Koehrer K."/>
            <person name="Ottenwaelder B."/>
            <person name="Poustka A."/>
            <person name="Wiemann S."/>
            <person name="Schupp I."/>
        </authorList>
    </citation>
    <scope>NUCLEOTIDE SEQUENCE [LARGE SCALE MRNA]</scope>
    <source>
        <tissue>Testis</tissue>
    </source>
</reference>
<reference key="4">
    <citation type="journal article" date="2006" name="Nature">
        <title>The DNA sequence and biological annotation of human chromosome 1.</title>
        <authorList>
            <person name="Gregory S.G."/>
            <person name="Barlow K.F."/>
            <person name="McLay K.E."/>
            <person name="Kaul R."/>
            <person name="Swarbreck D."/>
            <person name="Dunham A."/>
            <person name="Scott C.E."/>
            <person name="Howe K.L."/>
            <person name="Woodfine K."/>
            <person name="Spencer C.C.A."/>
            <person name="Jones M.C."/>
            <person name="Gillson C."/>
            <person name="Searle S."/>
            <person name="Zhou Y."/>
            <person name="Kokocinski F."/>
            <person name="McDonald L."/>
            <person name="Evans R."/>
            <person name="Phillips K."/>
            <person name="Atkinson A."/>
            <person name="Cooper R."/>
            <person name="Jones C."/>
            <person name="Hall R.E."/>
            <person name="Andrews T.D."/>
            <person name="Lloyd C."/>
            <person name="Ainscough R."/>
            <person name="Almeida J.P."/>
            <person name="Ambrose K.D."/>
            <person name="Anderson F."/>
            <person name="Andrew R.W."/>
            <person name="Ashwell R.I.S."/>
            <person name="Aubin K."/>
            <person name="Babbage A.K."/>
            <person name="Bagguley C.L."/>
            <person name="Bailey J."/>
            <person name="Beasley H."/>
            <person name="Bethel G."/>
            <person name="Bird C.P."/>
            <person name="Bray-Allen S."/>
            <person name="Brown J.Y."/>
            <person name="Brown A.J."/>
            <person name="Buckley D."/>
            <person name="Burton J."/>
            <person name="Bye J."/>
            <person name="Carder C."/>
            <person name="Chapman J.C."/>
            <person name="Clark S.Y."/>
            <person name="Clarke G."/>
            <person name="Clee C."/>
            <person name="Cobley V."/>
            <person name="Collier R.E."/>
            <person name="Corby N."/>
            <person name="Coville G.J."/>
            <person name="Davies J."/>
            <person name="Deadman R."/>
            <person name="Dunn M."/>
            <person name="Earthrowl M."/>
            <person name="Ellington A.G."/>
            <person name="Errington H."/>
            <person name="Frankish A."/>
            <person name="Frankland J."/>
            <person name="French L."/>
            <person name="Garner P."/>
            <person name="Garnett J."/>
            <person name="Gay L."/>
            <person name="Ghori M.R.J."/>
            <person name="Gibson R."/>
            <person name="Gilby L.M."/>
            <person name="Gillett W."/>
            <person name="Glithero R.J."/>
            <person name="Grafham D.V."/>
            <person name="Griffiths C."/>
            <person name="Griffiths-Jones S."/>
            <person name="Grocock R."/>
            <person name="Hammond S."/>
            <person name="Harrison E.S.I."/>
            <person name="Hart E."/>
            <person name="Haugen E."/>
            <person name="Heath P.D."/>
            <person name="Holmes S."/>
            <person name="Holt K."/>
            <person name="Howden P.J."/>
            <person name="Hunt A.R."/>
            <person name="Hunt S.E."/>
            <person name="Hunter G."/>
            <person name="Isherwood J."/>
            <person name="James R."/>
            <person name="Johnson C."/>
            <person name="Johnson D."/>
            <person name="Joy A."/>
            <person name="Kay M."/>
            <person name="Kershaw J.K."/>
            <person name="Kibukawa M."/>
            <person name="Kimberley A.M."/>
            <person name="King A."/>
            <person name="Knights A.J."/>
            <person name="Lad H."/>
            <person name="Laird G."/>
            <person name="Lawlor S."/>
            <person name="Leongamornlert D.A."/>
            <person name="Lloyd D.M."/>
            <person name="Loveland J."/>
            <person name="Lovell J."/>
            <person name="Lush M.J."/>
            <person name="Lyne R."/>
            <person name="Martin S."/>
            <person name="Mashreghi-Mohammadi M."/>
            <person name="Matthews L."/>
            <person name="Matthews N.S.W."/>
            <person name="McLaren S."/>
            <person name="Milne S."/>
            <person name="Mistry S."/>
            <person name="Moore M.J.F."/>
            <person name="Nickerson T."/>
            <person name="O'Dell C.N."/>
            <person name="Oliver K."/>
            <person name="Palmeiri A."/>
            <person name="Palmer S.A."/>
            <person name="Parker A."/>
            <person name="Patel D."/>
            <person name="Pearce A.V."/>
            <person name="Peck A.I."/>
            <person name="Pelan S."/>
            <person name="Phelps K."/>
            <person name="Phillimore B.J."/>
            <person name="Plumb R."/>
            <person name="Rajan J."/>
            <person name="Raymond C."/>
            <person name="Rouse G."/>
            <person name="Saenphimmachak C."/>
            <person name="Sehra H.K."/>
            <person name="Sheridan E."/>
            <person name="Shownkeen R."/>
            <person name="Sims S."/>
            <person name="Skuce C.D."/>
            <person name="Smith M."/>
            <person name="Steward C."/>
            <person name="Subramanian S."/>
            <person name="Sycamore N."/>
            <person name="Tracey A."/>
            <person name="Tromans A."/>
            <person name="Van Helmond Z."/>
            <person name="Wall M."/>
            <person name="Wallis J.M."/>
            <person name="White S."/>
            <person name="Whitehead S.L."/>
            <person name="Wilkinson J.E."/>
            <person name="Willey D.L."/>
            <person name="Williams H."/>
            <person name="Wilming L."/>
            <person name="Wray P.W."/>
            <person name="Wu Z."/>
            <person name="Coulson A."/>
            <person name="Vaudin M."/>
            <person name="Sulston J.E."/>
            <person name="Durbin R.M."/>
            <person name="Hubbard T."/>
            <person name="Wooster R."/>
            <person name="Dunham I."/>
            <person name="Carter N.P."/>
            <person name="McVean G."/>
            <person name="Ross M.T."/>
            <person name="Harrow J."/>
            <person name="Olson M.V."/>
            <person name="Beck S."/>
            <person name="Rogers J."/>
            <person name="Bentley D.R."/>
        </authorList>
    </citation>
    <scope>NUCLEOTIDE SEQUENCE [LARGE SCALE GENOMIC DNA]</scope>
</reference>
<reference key="5">
    <citation type="journal article" date="2004" name="Genome Res.">
        <title>The status, quality, and expansion of the NIH full-length cDNA project: the Mammalian Gene Collection (MGC).</title>
        <authorList>
            <consortium name="The MGC Project Team"/>
        </authorList>
    </citation>
    <scope>NUCLEOTIDE SEQUENCE [LARGE SCALE MRNA]</scope>
    <source>
        <tissue>Brain</tissue>
    </source>
</reference>
<reference key="6">
    <citation type="journal article" date="2017" name="Nat. Struct. Mol. Biol.">
        <title>Site-specific mapping of the human SUMO proteome reveals co-modification with phosphorylation.</title>
        <authorList>
            <person name="Hendriks I.A."/>
            <person name="Lyon D."/>
            <person name="Young C."/>
            <person name="Jensen L.J."/>
            <person name="Vertegaal A.C."/>
            <person name="Nielsen M.L."/>
        </authorList>
    </citation>
    <scope>SUMOYLATION [LARGE SCALE ANALYSIS] AT LYS-66</scope>
    <scope>IDENTIFICATION BY MASS SPECTROMETRY [LARGE SCALE ANALYSIS]</scope>
</reference>
<reference key="7">
    <citation type="journal article" date="2006" name="Science">
        <title>The consensus coding sequences of human breast and colorectal cancers.</title>
        <authorList>
            <person name="Sjoeblom T."/>
            <person name="Jones S."/>
            <person name="Wood L.D."/>
            <person name="Parsons D.W."/>
            <person name="Lin J."/>
            <person name="Barber T.D."/>
            <person name="Mandelker D."/>
            <person name="Leary R.J."/>
            <person name="Ptak J."/>
            <person name="Silliman N."/>
            <person name="Szabo S."/>
            <person name="Buckhaults P."/>
            <person name="Farrell C."/>
            <person name="Meeh P."/>
            <person name="Markowitz S.D."/>
            <person name="Willis J."/>
            <person name="Dawson D."/>
            <person name="Willson J.K.V."/>
            <person name="Gazdar A.F."/>
            <person name="Hartigan J."/>
            <person name="Wu L."/>
            <person name="Liu C."/>
            <person name="Parmigiani G."/>
            <person name="Park B.H."/>
            <person name="Bachman K.E."/>
            <person name="Papadopoulos N."/>
            <person name="Vogelstein B."/>
            <person name="Kinzler K.W."/>
            <person name="Velculescu V.E."/>
        </authorList>
    </citation>
    <scope>VARIANT [LARGE SCALE ANALYSIS] GLY-196</scope>
</reference>
<dbReference type="EMBL" id="AB051497">
    <property type="protein sequence ID" value="BAB21801.1"/>
    <property type="status" value="ALT_INIT"/>
    <property type="molecule type" value="mRNA"/>
</dbReference>
<dbReference type="EMBL" id="AL834485">
    <property type="protein sequence ID" value="CAD39143.1"/>
    <property type="molecule type" value="mRNA"/>
</dbReference>
<dbReference type="EMBL" id="AL109936">
    <property type="status" value="NOT_ANNOTATED_CDS"/>
    <property type="molecule type" value="Genomic_DNA"/>
</dbReference>
<dbReference type="EMBL" id="BC056400">
    <property type="protein sequence ID" value="AAH56400.1"/>
    <property type="molecule type" value="mRNA"/>
</dbReference>
<dbReference type="CCDS" id="CCDS233.1"/>
<dbReference type="RefSeq" id="NP_001070663.1">
    <property type="nucleotide sequence ID" value="NM_001077195.2"/>
</dbReference>
<dbReference type="RefSeq" id="NP_085137.1">
    <property type="nucleotide sequence ID" value="NM_030634.3"/>
</dbReference>
<dbReference type="SMR" id="Q9C0F3"/>
<dbReference type="BioGRID" id="123316">
    <property type="interactions" value="19"/>
</dbReference>
<dbReference type="FunCoup" id="Q9C0F3">
    <property type="interactions" value="860"/>
</dbReference>
<dbReference type="IntAct" id="Q9C0F3">
    <property type="interactions" value="31"/>
</dbReference>
<dbReference type="MINT" id="Q9C0F3"/>
<dbReference type="STRING" id="9606.ENSP00000313582"/>
<dbReference type="iPTMnet" id="Q9C0F3"/>
<dbReference type="PhosphoSitePlus" id="Q9C0F3"/>
<dbReference type="BioMuta" id="ZNF436"/>
<dbReference type="DMDM" id="20141030"/>
<dbReference type="jPOST" id="Q9C0F3"/>
<dbReference type="MassIVE" id="Q9C0F3"/>
<dbReference type="PaxDb" id="9606-ENSP00000313582"/>
<dbReference type="PeptideAtlas" id="Q9C0F3"/>
<dbReference type="ProteomicsDB" id="80030"/>
<dbReference type="Pumba" id="Q9C0F3"/>
<dbReference type="Antibodypedia" id="15569">
    <property type="antibodies" value="134 antibodies from 24 providers"/>
</dbReference>
<dbReference type="DNASU" id="80818"/>
<dbReference type="Ensembl" id="ENST00000314011.9">
    <property type="protein sequence ID" value="ENSP00000313582.4"/>
    <property type="gene ID" value="ENSG00000125945.16"/>
</dbReference>
<dbReference type="Ensembl" id="ENST00000374608.3">
    <property type="protein sequence ID" value="ENSP00000363736.3"/>
    <property type="gene ID" value="ENSG00000125945.16"/>
</dbReference>
<dbReference type="Ensembl" id="ENST00000635349.1">
    <property type="protein sequence ID" value="ENSP00000489127.1"/>
    <property type="gene ID" value="ENSG00000283009.3"/>
</dbReference>
<dbReference type="Ensembl" id="ENST00000635400.2">
    <property type="protein sequence ID" value="ENSP00000489469.1"/>
    <property type="gene ID" value="ENSG00000283009.3"/>
</dbReference>
<dbReference type="GeneID" id="80818"/>
<dbReference type="KEGG" id="hsa:80818"/>
<dbReference type="MANE-Select" id="ENST00000314011.9">
    <property type="protein sequence ID" value="ENSP00000313582.4"/>
    <property type="RefSeq nucleotide sequence ID" value="NM_001077195.2"/>
    <property type="RefSeq protein sequence ID" value="NP_001070663.1"/>
</dbReference>
<dbReference type="UCSC" id="uc001bgt.4">
    <property type="organism name" value="human"/>
</dbReference>
<dbReference type="AGR" id="HGNC:20814"/>
<dbReference type="CTD" id="80818"/>
<dbReference type="DisGeNET" id="80818"/>
<dbReference type="GeneCards" id="ZNF436"/>
<dbReference type="HGNC" id="HGNC:20814">
    <property type="gene designation" value="ZNF436"/>
</dbReference>
<dbReference type="HPA" id="ENSG00000125945">
    <property type="expression patterns" value="Low tissue specificity"/>
</dbReference>
<dbReference type="MIM" id="611703">
    <property type="type" value="gene"/>
</dbReference>
<dbReference type="neXtProt" id="NX_Q9C0F3"/>
<dbReference type="OpenTargets" id="ENSG00000125945"/>
<dbReference type="PharmGKB" id="PA134911283"/>
<dbReference type="VEuPathDB" id="HostDB:ENSG00000125945"/>
<dbReference type="eggNOG" id="KOG1721">
    <property type="taxonomic scope" value="Eukaryota"/>
</dbReference>
<dbReference type="GeneTree" id="ENSGT00940000153587"/>
<dbReference type="HOGENOM" id="CLU_002678_44_0_1"/>
<dbReference type="InParanoid" id="Q9C0F3"/>
<dbReference type="OMA" id="EAHTGIR"/>
<dbReference type="OrthoDB" id="6591996at2759"/>
<dbReference type="PAN-GO" id="Q9C0F3">
    <property type="GO annotations" value="3 GO annotations based on evolutionary models"/>
</dbReference>
<dbReference type="PhylomeDB" id="Q9C0F3"/>
<dbReference type="TreeFam" id="TF337055"/>
<dbReference type="PathwayCommons" id="Q9C0F3"/>
<dbReference type="Reactome" id="R-HSA-212436">
    <property type="pathway name" value="Generic Transcription Pathway"/>
</dbReference>
<dbReference type="SignaLink" id="Q9C0F3"/>
<dbReference type="BioGRID-ORCS" id="80818">
    <property type="hits" value="17 hits in 1180 CRISPR screens"/>
</dbReference>
<dbReference type="ChiTaRS" id="ZNF436">
    <property type="organism name" value="human"/>
</dbReference>
<dbReference type="GeneWiki" id="ZNF436"/>
<dbReference type="GenomeRNAi" id="80818"/>
<dbReference type="Pharos" id="Q9C0F3">
    <property type="development level" value="Tbio"/>
</dbReference>
<dbReference type="PRO" id="PR:Q9C0F3"/>
<dbReference type="Proteomes" id="UP000005640">
    <property type="component" value="Chromosome 1"/>
</dbReference>
<dbReference type="RNAct" id="Q9C0F3">
    <property type="molecule type" value="protein"/>
</dbReference>
<dbReference type="Bgee" id="ENSG00000125945">
    <property type="expression patterns" value="Expressed in cortical plate and 107 other cell types or tissues"/>
</dbReference>
<dbReference type="GO" id="GO:0005829">
    <property type="term" value="C:cytosol"/>
    <property type="evidence" value="ECO:0000314"/>
    <property type="project" value="HPA"/>
</dbReference>
<dbReference type="GO" id="GO:0005654">
    <property type="term" value="C:nucleoplasm"/>
    <property type="evidence" value="ECO:0000314"/>
    <property type="project" value="HPA"/>
</dbReference>
<dbReference type="GO" id="GO:0005634">
    <property type="term" value="C:nucleus"/>
    <property type="evidence" value="ECO:0000318"/>
    <property type="project" value="GO_Central"/>
</dbReference>
<dbReference type="GO" id="GO:0000981">
    <property type="term" value="F:DNA-binding transcription factor activity, RNA polymerase II-specific"/>
    <property type="evidence" value="ECO:0000318"/>
    <property type="project" value="GO_Central"/>
</dbReference>
<dbReference type="GO" id="GO:0000977">
    <property type="term" value="F:RNA polymerase II transcription regulatory region sequence-specific DNA binding"/>
    <property type="evidence" value="ECO:0000318"/>
    <property type="project" value="GO_Central"/>
</dbReference>
<dbReference type="GO" id="GO:0008270">
    <property type="term" value="F:zinc ion binding"/>
    <property type="evidence" value="ECO:0007669"/>
    <property type="project" value="UniProtKB-KW"/>
</dbReference>
<dbReference type="GO" id="GO:0006357">
    <property type="term" value="P:regulation of transcription by RNA polymerase II"/>
    <property type="evidence" value="ECO:0000318"/>
    <property type="project" value="GO_Central"/>
</dbReference>
<dbReference type="CDD" id="cd07765">
    <property type="entry name" value="KRAB_A-box"/>
    <property type="match status" value="1"/>
</dbReference>
<dbReference type="FunFam" id="3.30.160.60:FF:000139">
    <property type="entry name" value="zinc finger protein 1 homolog"/>
    <property type="match status" value="2"/>
</dbReference>
<dbReference type="FunFam" id="3.30.160.60:FF:002343">
    <property type="entry name" value="Zinc finger protein 33A"/>
    <property type="match status" value="1"/>
</dbReference>
<dbReference type="FunFam" id="3.30.160.60:FF:000135">
    <property type="entry name" value="Zinc finger protein 358"/>
    <property type="match status" value="1"/>
</dbReference>
<dbReference type="FunFam" id="3.30.160.60:FF:000016">
    <property type="entry name" value="zinc finger protein 37 homolog"/>
    <property type="match status" value="1"/>
</dbReference>
<dbReference type="FunFam" id="3.30.160.60:FF:000967">
    <property type="entry name" value="zinc finger protein 436 isoform X1"/>
    <property type="match status" value="1"/>
</dbReference>
<dbReference type="FunFam" id="3.30.160.60:FF:001219">
    <property type="entry name" value="zinc finger protein 436 isoform X2"/>
    <property type="match status" value="1"/>
</dbReference>
<dbReference type="FunFam" id="3.30.160.60:FF:002090">
    <property type="entry name" value="Zinc finger protein 473"/>
    <property type="match status" value="1"/>
</dbReference>
<dbReference type="FunFam" id="3.30.160.60:FF:002254">
    <property type="entry name" value="Zinc finger protein 540"/>
    <property type="match status" value="2"/>
</dbReference>
<dbReference type="FunFam" id="3.30.160.60:FF:001697">
    <property type="entry name" value="zinc finger protein 623"/>
    <property type="match status" value="2"/>
</dbReference>
<dbReference type="Gene3D" id="6.10.140.140">
    <property type="match status" value="1"/>
</dbReference>
<dbReference type="Gene3D" id="3.30.160.60">
    <property type="entry name" value="Classic Zinc Finger"/>
    <property type="match status" value="12"/>
</dbReference>
<dbReference type="InterPro" id="IPR001909">
    <property type="entry name" value="KRAB"/>
</dbReference>
<dbReference type="InterPro" id="IPR036051">
    <property type="entry name" value="KRAB_dom_sf"/>
</dbReference>
<dbReference type="InterPro" id="IPR036236">
    <property type="entry name" value="Znf_C2H2_sf"/>
</dbReference>
<dbReference type="InterPro" id="IPR013087">
    <property type="entry name" value="Znf_C2H2_type"/>
</dbReference>
<dbReference type="PANTHER" id="PTHR23235:SF178">
    <property type="entry name" value="C2H2-TYPE DOMAIN-CONTAINING PROTEIN-RELATED"/>
    <property type="match status" value="1"/>
</dbReference>
<dbReference type="PANTHER" id="PTHR23235">
    <property type="entry name" value="KRUEPPEL-LIKE TRANSCRIPTION FACTOR"/>
    <property type="match status" value="1"/>
</dbReference>
<dbReference type="Pfam" id="PF01352">
    <property type="entry name" value="KRAB"/>
    <property type="match status" value="1"/>
</dbReference>
<dbReference type="Pfam" id="PF00096">
    <property type="entry name" value="zf-C2H2"/>
    <property type="match status" value="12"/>
</dbReference>
<dbReference type="SMART" id="SM00349">
    <property type="entry name" value="KRAB"/>
    <property type="match status" value="1"/>
</dbReference>
<dbReference type="SMART" id="SM00355">
    <property type="entry name" value="ZnF_C2H2"/>
    <property type="match status" value="12"/>
</dbReference>
<dbReference type="SUPFAM" id="SSF57667">
    <property type="entry name" value="beta-beta-alpha zinc fingers"/>
    <property type="match status" value="6"/>
</dbReference>
<dbReference type="SUPFAM" id="SSF109640">
    <property type="entry name" value="KRAB domain (Kruppel-associated box)"/>
    <property type="match status" value="1"/>
</dbReference>
<dbReference type="PROSITE" id="PS50805">
    <property type="entry name" value="KRAB"/>
    <property type="match status" value="1"/>
</dbReference>
<dbReference type="PROSITE" id="PS00028">
    <property type="entry name" value="ZINC_FINGER_C2H2_1"/>
    <property type="match status" value="12"/>
</dbReference>
<dbReference type="PROSITE" id="PS50157">
    <property type="entry name" value="ZINC_FINGER_C2H2_2"/>
    <property type="match status" value="12"/>
</dbReference>
<sequence>MAATLLMAGSQAPVTFEDMAMYLTREEWRPLDAAQRDLYRDVMQENYGNVVSLDFEIRSENEVNPKQEISEDVQFGTTSERPAENAEENPESEEGFESGDRSERQWGDLTAEEWVSYPLQPVTDLLVHKEVHTGIRYHICSHCGKAFSQISDLNRHQKTHTGDRPYKCYECGKGFSRSSHLIQHQRTHTGERPYDCNECGKSFGRSSHLIQHQTIHTGEKPHKCNECGKSFCRLSHLIQHQRTHSGEKPYECEECGKSFSRSSHLAQHQRTHTGEKPYECNECGRGFSERSDLIKHYRVHTGERPYKCDECGKNFSQNSDLVRHRRAHTGEKPYHCNECGENFSRISHLVQHQRTHTGEKPYECNACGKSFSRSSHLITHQKIHTGEKPYECNECWRSFGERSDLIKHQRTHTGEKPYECVQCGKGFTQSSNLITHQRVHTGEKPYECTECEKSFSRSSALIKHKRVHTD</sequence>